<keyword id="KW-0066">ATP synthesis</keyword>
<keyword id="KW-1003">Cell membrane</keyword>
<keyword id="KW-0139">CF(1)</keyword>
<keyword id="KW-0375">Hydrogen ion transport</keyword>
<keyword id="KW-0406">Ion transport</keyword>
<keyword id="KW-0472">Membrane</keyword>
<keyword id="KW-1185">Reference proteome</keyword>
<keyword id="KW-0813">Transport</keyword>
<gene>
    <name evidence="1" type="primary">atpH</name>
    <name type="ordered locus">MCCL_1760</name>
</gene>
<comment type="function">
    <text evidence="1">F(1)F(0) ATP synthase produces ATP from ADP in the presence of a proton or sodium gradient. F-type ATPases consist of two structural domains, F(1) containing the extramembraneous catalytic core and F(0) containing the membrane proton channel, linked together by a central stalk and a peripheral stalk. During catalysis, ATP synthesis in the catalytic domain of F(1) is coupled via a rotary mechanism of the central stalk subunits to proton translocation.</text>
</comment>
<comment type="function">
    <text evidence="1">This protein is part of the stalk that links CF(0) to CF(1). It either transmits conformational changes from CF(0) to CF(1) or is implicated in proton conduction.</text>
</comment>
<comment type="subunit">
    <text evidence="1">F-type ATPases have 2 components, F(1) - the catalytic core - and F(0) - the membrane proton channel. F(1) has five subunits: alpha(3), beta(3), gamma(1), delta(1), epsilon(1). F(0) has three main subunits: a(1), b(2) and c(10-14). The alpha and beta chains form an alternating ring which encloses part of the gamma chain. F(1) is attached to F(0) by a central stalk formed by the gamma and epsilon chains, while a peripheral stalk is formed by the delta and b chains.</text>
</comment>
<comment type="subcellular location">
    <subcellularLocation>
        <location evidence="1">Cell membrane</location>
        <topology evidence="1">Peripheral membrane protein</topology>
    </subcellularLocation>
</comment>
<comment type="similarity">
    <text evidence="1">Belongs to the ATPase delta chain family.</text>
</comment>
<evidence type="ECO:0000255" key="1">
    <source>
        <dbReference type="HAMAP-Rule" id="MF_01416"/>
    </source>
</evidence>
<dbReference type="EMBL" id="AP009484">
    <property type="protein sequence ID" value="BAH18467.1"/>
    <property type="molecule type" value="Genomic_DNA"/>
</dbReference>
<dbReference type="RefSeq" id="WP_015912259.1">
    <property type="nucleotide sequence ID" value="NC_011999.1"/>
</dbReference>
<dbReference type="SMR" id="B9E8E9"/>
<dbReference type="STRING" id="458233.MCCL_1760"/>
<dbReference type="KEGG" id="mcl:MCCL_1760"/>
<dbReference type="eggNOG" id="COG0712">
    <property type="taxonomic scope" value="Bacteria"/>
</dbReference>
<dbReference type="HOGENOM" id="CLU_085114_4_1_9"/>
<dbReference type="OrthoDB" id="9802471at2"/>
<dbReference type="Proteomes" id="UP000001383">
    <property type="component" value="Chromosome"/>
</dbReference>
<dbReference type="GO" id="GO:0005886">
    <property type="term" value="C:plasma membrane"/>
    <property type="evidence" value="ECO:0007669"/>
    <property type="project" value="UniProtKB-SubCell"/>
</dbReference>
<dbReference type="GO" id="GO:0045259">
    <property type="term" value="C:proton-transporting ATP synthase complex"/>
    <property type="evidence" value="ECO:0007669"/>
    <property type="project" value="UniProtKB-KW"/>
</dbReference>
<dbReference type="GO" id="GO:0046933">
    <property type="term" value="F:proton-transporting ATP synthase activity, rotational mechanism"/>
    <property type="evidence" value="ECO:0007669"/>
    <property type="project" value="UniProtKB-UniRule"/>
</dbReference>
<dbReference type="Gene3D" id="1.10.520.20">
    <property type="entry name" value="N-terminal domain of the delta subunit of the F1F0-ATP synthase"/>
    <property type="match status" value="1"/>
</dbReference>
<dbReference type="HAMAP" id="MF_01416">
    <property type="entry name" value="ATP_synth_delta_bact"/>
    <property type="match status" value="1"/>
</dbReference>
<dbReference type="InterPro" id="IPR026015">
    <property type="entry name" value="ATP_synth_OSCP/delta_N_sf"/>
</dbReference>
<dbReference type="InterPro" id="IPR000711">
    <property type="entry name" value="ATPase_OSCP/dsu"/>
</dbReference>
<dbReference type="NCBIfam" id="TIGR01145">
    <property type="entry name" value="ATP_synt_delta"/>
    <property type="match status" value="1"/>
</dbReference>
<dbReference type="PANTHER" id="PTHR11910">
    <property type="entry name" value="ATP SYNTHASE DELTA CHAIN"/>
    <property type="match status" value="1"/>
</dbReference>
<dbReference type="Pfam" id="PF00213">
    <property type="entry name" value="OSCP"/>
    <property type="match status" value="1"/>
</dbReference>
<dbReference type="PRINTS" id="PR00125">
    <property type="entry name" value="ATPASEDELTA"/>
</dbReference>
<dbReference type="SUPFAM" id="SSF47928">
    <property type="entry name" value="N-terminal domain of the delta subunit of the F1F0-ATP synthase"/>
    <property type="match status" value="1"/>
</dbReference>
<sequence>MAIVQDKYAQSLFEVAQAQGVHESVRQDLVEIKEGLAGNKAFFAFAEDPKVSSEKRHAFVEATFSGVDKPLRNLLSILADKKQLALLPSIADYYTEHYNKFNNQQYMKVESVYALSSEELDEIGKAFIKRTGYKKLLIENVVNSTLIGGIRATIGTTVYDGSVANELTQLEKSFHKQ</sequence>
<name>ATPD_MACCJ</name>
<reference key="1">
    <citation type="journal article" date="2009" name="J. Bacteriol.">
        <title>Complete genome sequence of Macrococcus caseolyticus strain JCSCS5402, reflecting the ancestral genome of the human-pathogenic staphylococci.</title>
        <authorList>
            <person name="Baba T."/>
            <person name="Kuwahara-Arai K."/>
            <person name="Uchiyama I."/>
            <person name="Takeuchi F."/>
            <person name="Ito T."/>
            <person name="Hiramatsu K."/>
        </authorList>
    </citation>
    <scope>NUCLEOTIDE SEQUENCE [LARGE SCALE GENOMIC DNA]</scope>
    <source>
        <strain>JCSC5402</strain>
    </source>
</reference>
<feature type="chain" id="PRO_1000184747" description="ATP synthase subunit delta">
    <location>
        <begin position="1"/>
        <end position="177"/>
    </location>
</feature>
<organism>
    <name type="scientific">Macrococcus caseolyticus (strain JCSC5402)</name>
    <name type="common">Macrococcoides caseolyticum</name>
    <dbReference type="NCBI Taxonomy" id="458233"/>
    <lineage>
        <taxon>Bacteria</taxon>
        <taxon>Bacillati</taxon>
        <taxon>Bacillota</taxon>
        <taxon>Bacilli</taxon>
        <taxon>Bacillales</taxon>
        <taxon>Staphylococcaceae</taxon>
        <taxon>Macrococcoides</taxon>
    </lineage>
</organism>
<proteinExistence type="inferred from homology"/>
<protein>
    <recommendedName>
        <fullName evidence="1">ATP synthase subunit delta</fullName>
    </recommendedName>
    <alternativeName>
        <fullName evidence="1">ATP synthase F(1) sector subunit delta</fullName>
    </alternativeName>
    <alternativeName>
        <fullName evidence="1">F-type ATPase subunit delta</fullName>
        <shortName evidence="1">F-ATPase subunit delta</shortName>
    </alternativeName>
</protein>
<accession>B9E8E9</accession>